<comment type="function">
    <text evidence="1">Catalyzes the conversion of O-acetyl-L-homoserine (OAH) into homocysteine in the methionine biosynthesis pathway. Has weak activity with O-acetyl-L-serine, O-phospho-L-serine, L-serine, O-succinyl-L-homoserine and L-homoserine. Shows low CTT beta-lyase activity and very low CTT gamma-synthase activity.</text>
</comment>
<comment type="catalytic activity">
    <reaction evidence="1">
        <text>O-acetyl-L-homoserine + hydrogen sulfide = L-homocysteine + acetate</text>
        <dbReference type="Rhea" id="RHEA:27822"/>
        <dbReference type="ChEBI" id="CHEBI:29919"/>
        <dbReference type="ChEBI" id="CHEBI:30089"/>
        <dbReference type="ChEBI" id="CHEBI:57716"/>
        <dbReference type="ChEBI" id="CHEBI:58199"/>
    </reaction>
</comment>
<comment type="cofactor">
    <cofactor evidence="2 5">
        <name>pyridoxal 5'-phosphate</name>
        <dbReference type="ChEBI" id="CHEBI:597326"/>
    </cofactor>
</comment>
<comment type="activity regulation">
    <text evidence="1">Inhibited by the carbonyl reagents hydroxylamine and phenylhydrazine. Also inhibited by methionine and propargylglycine.</text>
</comment>
<comment type="biophysicochemical properties">
    <kinetics>
        <KM evidence="1">6.8 mM for O-acetyl-L-homoserine</KM>
        <KM evidence="1">1.3 mM for sulfide</KM>
        <Vmax evidence="1">165.0 umol/min/mg enzyme</Vmax>
    </kinetics>
    <phDependence>
        <text evidence="1">Optimum pH is 7.8. Shows high pH stability over a wide range of pH (pH 4-12).</text>
    </phDependence>
    <temperatureDependence>
        <text evidence="1">Optimum temperature is 70 degrees Celsius. Very stable at high temperature. 90% of the activity is retained after treatment at 90 degrees Celsius for 60 minutes.</text>
    </temperatureDependence>
</comment>
<comment type="pathway">
    <text evidence="5">Amino-acid biosynthesis; L-methionine biosynthesis via de novo pathway; L-homocysteine from O-acetyl-L-homoserine: step 1/1.</text>
</comment>
<comment type="subunit">
    <text evidence="1">Homotetramer.</text>
</comment>
<comment type="similarity">
    <text evidence="4">Belongs to the trans-sulfuration enzymes family.</text>
</comment>
<feature type="chain" id="PRO_0000445420" description="O-acetyl-L-homoserine sulfhydrylase 1">
    <location>
        <begin position="1"/>
        <end position="421"/>
    </location>
</feature>
<feature type="modified residue" description="N6-(pyridoxal phosphate)lysine" evidence="2">
    <location>
        <position position="206"/>
    </location>
</feature>
<feature type="helix" evidence="8">
    <location>
        <begin position="3"/>
        <end position="9"/>
    </location>
</feature>
<feature type="turn" evidence="8">
    <location>
        <begin position="16"/>
        <end position="18"/>
    </location>
</feature>
<feature type="strand" evidence="8">
    <location>
        <begin position="20"/>
        <end position="22"/>
    </location>
</feature>
<feature type="helix" evidence="8">
    <location>
        <begin position="36"/>
        <end position="43"/>
    </location>
</feature>
<feature type="turn" evidence="8">
    <location>
        <begin position="44"/>
        <end position="47"/>
    </location>
</feature>
<feature type="helix" evidence="8">
    <location>
        <begin position="48"/>
        <end position="50"/>
    </location>
</feature>
<feature type="helix" evidence="8">
    <location>
        <begin position="58"/>
        <end position="71"/>
    </location>
</feature>
<feature type="strand" evidence="8">
    <location>
        <begin position="74"/>
        <end position="81"/>
    </location>
</feature>
<feature type="helix" evidence="8">
    <location>
        <begin position="82"/>
        <end position="93"/>
    </location>
</feature>
<feature type="strand" evidence="8">
    <location>
        <begin position="99"/>
        <end position="102"/>
    </location>
</feature>
<feature type="helix" evidence="8">
    <location>
        <begin position="108"/>
        <end position="115"/>
    </location>
</feature>
<feature type="helix" evidence="8">
    <location>
        <begin position="117"/>
        <end position="120"/>
    </location>
</feature>
<feature type="strand" evidence="8">
    <location>
        <begin position="124"/>
        <end position="127"/>
    </location>
</feature>
<feature type="helix" evidence="8">
    <location>
        <begin position="134"/>
        <end position="140"/>
    </location>
</feature>
<feature type="strand" evidence="8">
    <location>
        <begin position="145"/>
        <end position="153"/>
    </location>
</feature>
<feature type="turn" evidence="8">
    <location>
        <begin position="155"/>
        <end position="157"/>
    </location>
</feature>
<feature type="helix" evidence="8">
    <location>
        <begin position="163"/>
        <end position="173"/>
    </location>
</feature>
<feature type="strand" evidence="8">
    <location>
        <begin position="176"/>
        <end position="180"/>
    </location>
</feature>
<feature type="helix" evidence="8">
    <location>
        <begin position="182"/>
        <end position="187"/>
    </location>
</feature>
<feature type="helix" evidence="8">
    <location>
        <begin position="192"/>
        <end position="195"/>
    </location>
</feature>
<feature type="strand" evidence="8">
    <location>
        <begin position="198"/>
        <end position="203"/>
    </location>
</feature>
<feature type="turn" evidence="8">
    <location>
        <begin position="204"/>
        <end position="209"/>
    </location>
</feature>
<feature type="strand" evidence="8">
    <location>
        <begin position="217"/>
        <end position="221"/>
    </location>
</feature>
<feature type="turn" evidence="8">
    <location>
        <begin position="228"/>
        <end position="231"/>
    </location>
</feature>
<feature type="helix" evidence="8">
    <location>
        <begin position="233"/>
        <end position="236"/>
    </location>
</feature>
<feature type="helix" evidence="8">
    <location>
        <begin position="240"/>
        <end position="242"/>
    </location>
</feature>
<feature type="helix" evidence="8">
    <location>
        <begin position="247"/>
        <end position="251"/>
    </location>
</feature>
<feature type="helix" evidence="8">
    <location>
        <begin position="252"/>
        <end position="254"/>
    </location>
</feature>
<feature type="helix" evidence="8">
    <location>
        <begin position="255"/>
        <end position="262"/>
    </location>
</feature>
<feature type="helix" evidence="8">
    <location>
        <begin position="264"/>
        <end position="268"/>
    </location>
</feature>
<feature type="helix" evidence="8">
    <location>
        <begin position="274"/>
        <end position="284"/>
    </location>
</feature>
<feature type="helix" evidence="8">
    <location>
        <begin position="287"/>
        <end position="306"/>
    </location>
</feature>
<feature type="strand" evidence="8">
    <location>
        <begin position="311"/>
        <end position="315"/>
    </location>
</feature>
<feature type="helix" evidence="8">
    <location>
        <begin position="325"/>
        <end position="332"/>
    </location>
</feature>
<feature type="strand" evidence="8">
    <location>
        <begin position="338"/>
        <end position="344"/>
    </location>
</feature>
<feature type="helix" evidence="8">
    <location>
        <begin position="347"/>
        <end position="356"/>
    </location>
</feature>
<feature type="strand" evidence="8">
    <location>
        <begin position="359"/>
        <end position="363"/>
    </location>
</feature>
<feature type="strand" evidence="8">
    <location>
        <begin position="373"/>
        <end position="375"/>
    </location>
</feature>
<feature type="helix" evidence="8">
    <location>
        <begin position="377"/>
        <end position="379"/>
    </location>
</feature>
<feature type="turn" evidence="8">
    <location>
        <begin position="380"/>
        <end position="384"/>
    </location>
</feature>
<feature type="helix" evidence="8">
    <location>
        <begin position="387"/>
        <end position="392"/>
    </location>
</feature>
<feature type="strand" evidence="8">
    <location>
        <begin position="399"/>
        <end position="403"/>
    </location>
</feature>
<feature type="helix" evidence="8">
    <location>
        <begin position="409"/>
        <end position="419"/>
    </location>
</feature>
<protein>
    <recommendedName>
        <fullName evidence="3">O-acetyl-L-homoserine sulfhydrylase 1</fullName>
        <shortName evidence="3">OAH-sulfhydrylase 1</shortName>
        <ecNumber evidence="1">2.5.1.-</ecNumber>
    </recommendedName>
</protein>
<reference key="1">
    <citation type="journal article" date="2001" name="Biochim. Biophys. Acta">
        <title>Cloning and overexpression of the oah1 gene encoding O-acetyl-L-homoserine sulfhydrylase of Thermus thermophilus HB8 and characterization of the gene product.</title>
        <authorList>
            <person name="Shimizu H."/>
            <person name="Yamagata S."/>
            <person name="Masui R."/>
            <person name="Inoue Y."/>
            <person name="Shibata T."/>
            <person name="Yokoyama S."/>
            <person name="Kuramitsu S."/>
            <person name="Iwama T."/>
        </authorList>
    </citation>
    <scope>NUCLEOTIDE SEQUENCE [GENOMIC DNA]</scope>
    <scope>FUNCTION</scope>
    <scope>CATALYTIC ACTIVITY</scope>
    <scope>COFACTOR</scope>
    <scope>ACTIVITY REGULATION</scope>
    <scope>BIOPHYSICOCHEMICAL PROPERTIES</scope>
    <scope>PATHWAY</scope>
    <scope>SUBUNIT</scope>
    <source>
        <strain>ATCC 27634 / DSM 579 / HB8</strain>
    </source>
</reference>
<reference key="2">
    <citation type="submission" date="2004-11" db="EMBL/GenBank/DDBJ databases">
        <title>Complete genome sequence of Thermus thermophilus HB8.</title>
        <authorList>
            <person name="Masui R."/>
            <person name="Kurokawa K."/>
            <person name="Nakagawa N."/>
            <person name="Tokunaga F."/>
            <person name="Koyama Y."/>
            <person name="Shibata T."/>
            <person name="Oshima T."/>
            <person name="Yokoyama S."/>
            <person name="Yasunaga T."/>
            <person name="Kuramitsu S."/>
        </authorList>
    </citation>
    <scope>NUCLEOTIDE SEQUENCE [LARGE SCALE GENOMIC DNA]</scope>
    <source>
        <strain>ATCC 27634 / DSM 579 / HB8</strain>
    </source>
</reference>
<reference evidence="7" key="3">
    <citation type="submission" date="2005-05" db="PDB data bank">
        <title>Crystal structure of O-acetyl homoserine sulfhydrylase from Thermus thermophilus HB8.</title>
        <authorList>
            <person name="Imagawa T."/>
            <person name="Kousumi Y."/>
            <person name="Tsuge H."/>
            <person name="Utsunomiya H."/>
            <person name="Ebihara A."/>
            <person name="Nakagawa N."/>
            <person name="Yokoyama S."/>
            <person name="Kuramitsu S."/>
        </authorList>
    </citation>
    <scope>X-RAY CRYSTALLOGRAPHY (2.60 ANGSTROMS)</scope>
    <scope>PYRIDOXAL PHOSPHATE AT LYS-206</scope>
    <scope>COFACTOR</scope>
    <source>
        <strain>ATCC 27634 / DSM 579 / HB8</strain>
    </source>
</reference>
<proteinExistence type="evidence at protein level"/>
<accession>Q5SK88</accession>
<accession>Q93I77</accession>
<keyword id="KW-0002">3D-structure</keyword>
<keyword id="KW-0028">Amino-acid biosynthesis</keyword>
<keyword id="KW-0486">Methionine biosynthesis</keyword>
<keyword id="KW-0663">Pyridoxal phosphate</keyword>
<keyword id="KW-1185">Reference proteome</keyword>
<keyword id="KW-0808">Transferase</keyword>
<name>METY1_THET8</name>
<gene>
    <name evidence="3" type="primary">oah1</name>
    <name evidence="6" type="ordered locus">TTHA0760</name>
</gene>
<organism>
    <name type="scientific">Thermus thermophilus (strain ATCC 27634 / DSM 579 / HB8)</name>
    <dbReference type="NCBI Taxonomy" id="300852"/>
    <lineage>
        <taxon>Bacteria</taxon>
        <taxon>Thermotogati</taxon>
        <taxon>Deinococcota</taxon>
        <taxon>Deinococci</taxon>
        <taxon>Thermales</taxon>
        <taxon>Thermaceae</taxon>
        <taxon>Thermus</taxon>
    </lineage>
</organism>
<dbReference type="EC" id="2.5.1.-" evidence="1"/>
<dbReference type="EMBL" id="AB049221">
    <property type="protein sequence ID" value="BAB68505.1"/>
    <property type="molecule type" value="Genomic_DNA"/>
</dbReference>
<dbReference type="EMBL" id="AP008226">
    <property type="protein sequence ID" value="BAD70583.1"/>
    <property type="molecule type" value="Genomic_DNA"/>
</dbReference>
<dbReference type="RefSeq" id="WP_011228178.1">
    <property type="nucleotide sequence ID" value="NC_006461.1"/>
</dbReference>
<dbReference type="RefSeq" id="YP_144026.1">
    <property type="nucleotide sequence ID" value="NC_006461.1"/>
</dbReference>
<dbReference type="PDB" id="2CTZ">
    <property type="method" value="X-ray"/>
    <property type="resolution" value="2.60 A"/>
    <property type="chains" value="A/B=1-421"/>
</dbReference>
<dbReference type="PDBsum" id="2CTZ"/>
<dbReference type="SMR" id="Q5SK88"/>
<dbReference type="EnsemblBacteria" id="BAD70583">
    <property type="protein sequence ID" value="BAD70583"/>
    <property type="gene ID" value="BAD70583"/>
</dbReference>
<dbReference type="GeneID" id="3169894"/>
<dbReference type="KEGG" id="ttj:TTHA0760"/>
<dbReference type="PATRIC" id="fig|300852.9.peg.753"/>
<dbReference type="eggNOG" id="COG2873">
    <property type="taxonomic scope" value="Bacteria"/>
</dbReference>
<dbReference type="HOGENOM" id="CLU_018986_4_0_0"/>
<dbReference type="PhylomeDB" id="Q5SK88"/>
<dbReference type="BRENDA" id="2.5.1.49">
    <property type="organism ID" value="2305"/>
</dbReference>
<dbReference type="UniPathway" id="UPA00051">
    <property type="reaction ID" value="UER00079"/>
</dbReference>
<dbReference type="EvolutionaryTrace" id="Q5SK88"/>
<dbReference type="Proteomes" id="UP000000532">
    <property type="component" value="Chromosome"/>
</dbReference>
<dbReference type="GO" id="GO:0005737">
    <property type="term" value="C:cytoplasm"/>
    <property type="evidence" value="ECO:0007669"/>
    <property type="project" value="TreeGrafter"/>
</dbReference>
<dbReference type="GO" id="GO:0004124">
    <property type="term" value="F:cysteine synthase activity"/>
    <property type="evidence" value="ECO:0007669"/>
    <property type="project" value="TreeGrafter"/>
</dbReference>
<dbReference type="GO" id="GO:0051009">
    <property type="term" value="F:O-acetylhomoserine sulfhydrylase activity"/>
    <property type="evidence" value="ECO:0007669"/>
    <property type="project" value="RHEA"/>
</dbReference>
<dbReference type="GO" id="GO:0030170">
    <property type="term" value="F:pyridoxal phosphate binding"/>
    <property type="evidence" value="ECO:0007669"/>
    <property type="project" value="InterPro"/>
</dbReference>
<dbReference type="GO" id="GO:0006535">
    <property type="term" value="P:cysteine biosynthetic process from serine"/>
    <property type="evidence" value="ECO:0007669"/>
    <property type="project" value="TreeGrafter"/>
</dbReference>
<dbReference type="GO" id="GO:0071269">
    <property type="term" value="P:L-homocysteine biosynthetic process"/>
    <property type="evidence" value="ECO:0007669"/>
    <property type="project" value="TreeGrafter"/>
</dbReference>
<dbReference type="GO" id="GO:0019346">
    <property type="term" value="P:transsulfuration"/>
    <property type="evidence" value="ECO:0007669"/>
    <property type="project" value="InterPro"/>
</dbReference>
<dbReference type="CDD" id="cd00614">
    <property type="entry name" value="CGS_like"/>
    <property type="match status" value="1"/>
</dbReference>
<dbReference type="FunFam" id="3.40.640.10:FF:000035">
    <property type="entry name" value="O-succinylhomoserine sulfhydrylase"/>
    <property type="match status" value="1"/>
</dbReference>
<dbReference type="Gene3D" id="3.90.1150.10">
    <property type="entry name" value="Aspartate Aminotransferase, domain 1"/>
    <property type="match status" value="1"/>
</dbReference>
<dbReference type="Gene3D" id="3.40.640.10">
    <property type="entry name" value="Type I PLP-dependent aspartate aminotransferase-like (Major domain)"/>
    <property type="match status" value="1"/>
</dbReference>
<dbReference type="InterPro" id="IPR000277">
    <property type="entry name" value="Cys/Met-Metab_PyrdxlP-dep_enz"/>
</dbReference>
<dbReference type="InterPro" id="IPR006235">
    <property type="entry name" value="OAc-hSer/O-AcSer_sulfhydrylase"/>
</dbReference>
<dbReference type="InterPro" id="IPR015424">
    <property type="entry name" value="PyrdxlP-dep_Trfase"/>
</dbReference>
<dbReference type="InterPro" id="IPR015421">
    <property type="entry name" value="PyrdxlP-dep_Trfase_major"/>
</dbReference>
<dbReference type="InterPro" id="IPR015422">
    <property type="entry name" value="PyrdxlP-dep_Trfase_small"/>
</dbReference>
<dbReference type="NCBIfam" id="TIGR01326">
    <property type="entry name" value="OAH_OAS_sulfhy"/>
    <property type="match status" value="1"/>
</dbReference>
<dbReference type="PANTHER" id="PTHR43797">
    <property type="entry name" value="HOMOCYSTEINE/CYSTEINE SYNTHASE"/>
    <property type="match status" value="1"/>
</dbReference>
<dbReference type="PANTHER" id="PTHR43797:SF2">
    <property type="entry name" value="HOMOCYSTEINE_CYSTEINE SYNTHASE"/>
    <property type="match status" value="1"/>
</dbReference>
<dbReference type="Pfam" id="PF01053">
    <property type="entry name" value="Cys_Met_Meta_PP"/>
    <property type="match status" value="1"/>
</dbReference>
<dbReference type="PIRSF" id="PIRSF001434">
    <property type="entry name" value="CGS"/>
    <property type="match status" value="1"/>
</dbReference>
<dbReference type="SUPFAM" id="SSF53383">
    <property type="entry name" value="PLP-dependent transferases"/>
    <property type="match status" value="1"/>
</dbReference>
<sequence>MRFETLQLHAGYEPEPTTLSRQVPIYPTTSYVFKSPEHAANLFALKEFGNIYSRIMNPTVDVLEKRLAALEGGKAALATASGHAAQFLALTTLAQAGDNIVSTPNLYGGTFNQFKVTLKRLGIEVRFTSREERPEEFLALTDEKTRAWWVESIGNPALNIPDLEALAQAAREKGVALIVDNTFGMGGYLLRPLAWGAALVTHSLTKWVGGHGAVIAGAIVDGGNFPWEGGRYPLLTEPQPGYHGLRLTEAFGELAFIVKARVDGLRDQGQALGPFEAWVVLLGMETLSLRAERHVENTLHLAHWLLEQPQVAWVNYPGLPHHPHHDRAQKYFKGKPGAVLTFGLKGGYEAAKRFISRLKLISHLANVGDTRTLAIHPASTTHSQLSPEEQAQAGVSPEMVRLSVGLEHVEDLKAELKEALA</sequence>
<evidence type="ECO:0000269" key="1">
    <source>
    </source>
</evidence>
<evidence type="ECO:0000269" key="2">
    <source ref="3"/>
</evidence>
<evidence type="ECO:0000303" key="3">
    <source>
    </source>
</evidence>
<evidence type="ECO:0000305" key="4"/>
<evidence type="ECO:0000305" key="5">
    <source>
    </source>
</evidence>
<evidence type="ECO:0000312" key="6">
    <source>
        <dbReference type="EMBL" id="BAD70583.1"/>
    </source>
</evidence>
<evidence type="ECO:0007744" key="7">
    <source>
        <dbReference type="PDB" id="2CTZ"/>
    </source>
</evidence>
<evidence type="ECO:0007829" key="8">
    <source>
        <dbReference type="PDB" id="2CTZ"/>
    </source>
</evidence>